<comment type="function">
    <text>Degradation of glucosinolates (glucose residue linked by a thioglucoside bound to an amino acid derivative) to glucose, sulfate and any of the products: thiocyanates, isothiocyanates, nitriles, epithionitriles or oxazolidine-2-thiones.</text>
</comment>
<comment type="catalytic activity">
    <reaction>
        <text>a thioglucoside + H2O = a sugar + a thiol.</text>
        <dbReference type="EC" id="3.2.1.147"/>
    </reaction>
</comment>
<comment type="subunit">
    <text>Homodimer.</text>
</comment>
<comment type="subcellular location">
    <subcellularLocation>
        <location>Vacuole</location>
    </subcellularLocation>
</comment>
<comment type="tissue specificity">
    <text>In vacuoles called myrosin grains of a certain class of cells, myrosin cells, distributed in the cotyledons and the axis of the embryo as well as in different organs of the growing plant.</text>
</comment>
<comment type="miscellaneous">
    <text>It seems that the absence of a catalytic proton donor in plant myrosinases is not impairing the hydrolysis of glucosinolates.</text>
</comment>
<comment type="similarity">
    <text evidence="4">Belongs to the glycosyl hydrolase 1 family.</text>
</comment>
<accession>Q00326</accession>
<protein>
    <recommendedName>
        <fullName>Myrosinase</fullName>
        <ecNumber>3.2.1.147</ecNumber>
    </recommendedName>
    <alternativeName>
        <fullName>Sinigrinase</fullName>
    </alternativeName>
    <alternativeName>
        <fullName>Thioglucosidase</fullName>
    </alternativeName>
</protein>
<feature type="signal peptide" evidence="1">
    <location>
        <begin position="1"/>
        <end position="20"/>
    </location>
</feature>
<feature type="chain" id="PRO_0000011774" description="Myrosinase">
    <location>
        <begin position="21"/>
        <end position="548"/>
    </location>
</feature>
<feature type="active site" description="Nucleophile" evidence="3">
    <location>
        <position position="429"/>
    </location>
</feature>
<feature type="binding site" evidence="1">
    <location>
        <position position="59"/>
    </location>
    <ligand>
        <name>substrate</name>
    </ligand>
</feature>
<feature type="binding site" evidence="1">
    <location>
        <position position="76"/>
    </location>
    <ligand>
        <name>Zn(2+)</name>
        <dbReference type="ChEBI" id="CHEBI:29105"/>
        <note>ligand shared between dimeric partners</note>
    </ligand>
</feature>
<feature type="binding site" evidence="1">
    <location>
        <position position="90"/>
    </location>
    <ligand>
        <name>Zn(2+)</name>
        <dbReference type="ChEBI" id="CHEBI:29105"/>
        <note>ligand shared between dimeric partners</note>
    </ligand>
</feature>
<feature type="binding site" evidence="1">
    <location>
        <position position="161"/>
    </location>
    <ligand>
        <name>substrate</name>
    </ligand>
</feature>
<feature type="binding site" evidence="1">
    <location>
        <position position="206"/>
    </location>
    <ligand>
        <name>substrate</name>
    </ligand>
</feature>
<feature type="binding site" evidence="1">
    <location>
        <position position="207"/>
    </location>
    <ligand>
        <name>L-ascorbate</name>
        <dbReference type="ChEBI" id="CHEBI:38290"/>
    </ligand>
</feature>
<feature type="binding site" evidence="1">
    <location>
        <position position="281"/>
    </location>
    <ligand>
        <name>L-ascorbate</name>
        <dbReference type="ChEBI" id="CHEBI:38290"/>
    </ligand>
</feature>
<feature type="binding site" evidence="1">
    <location>
        <position position="352"/>
    </location>
    <ligand>
        <name>substrate</name>
    </ligand>
</feature>
<feature type="binding site" evidence="1">
    <location>
        <position position="477"/>
    </location>
    <ligand>
        <name>substrate</name>
    </ligand>
</feature>
<feature type="binding site" evidence="1">
    <location>
        <begin position="484"/>
        <end position="485"/>
    </location>
    <ligand>
        <name>substrate</name>
    </ligand>
</feature>
<feature type="glycosylation site" description="N-linked (GlcNAc...) asparagine" evidence="2">
    <location>
        <position position="110"/>
    </location>
</feature>
<feature type="glycosylation site" description="N-linked (GlcNAc...) asparagine" evidence="2">
    <location>
        <position position="240"/>
    </location>
</feature>
<feature type="glycosylation site" description="N-linked (GlcNAc...) asparagine" evidence="2">
    <location>
        <position position="331"/>
    </location>
</feature>
<feature type="glycosylation site" description="N-linked (GlcNAc...) asparagine" evidence="2">
    <location>
        <position position="520"/>
    </location>
</feature>
<feature type="disulfide bond" evidence="1">
    <location>
        <begin position="26"/>
        <end position="458"/>
    </location>
</feature>
<feature type="disulfide bond" evidence="1">
    <location>
        <begin position="34"/>
        <end position="454"/>
    </location>
</feature>
<feature type="disulfide bond" evidence="1">
    <location>
        <begin position="226"/>
        <end position="236"/>
    </location>
</feature>
<reference key="1">
    <citation type="journal article" date="1992" name="Plant Sci.">
        <title>Sequence of a cDNA clone encoding the enzyme myrosinase, and expression of myrosinase in different tissues of Brassica napus.</title>
        <authorList>
            <person name="Falk A."/>
            <person name="Xue J."/>
            <person name="Lenman M."/>
            <person name="Rask L."/>
        </authorList>
    </citation>
    <scope>NUCLEOTIDE SEQUENCE [MRNA]</scope>
    <source>
        <strain>cv. Svalofs Karat</strain>
    </source>
</reference>
<organism>
    <name type="scientific">Brassica napus</name>
    <name type="common">Rape</name>
    <dbReference type="NCBI Taxonomy" id="3708"/>
    <lineage>
        <taxon>Eukaryota</taxon>
        <taxon>Viridiplantae</taxon>
        <taxon>Streptophyta</taxon>
        <taxon>Embryophyta</taxon>
        <taxon>Tracheophyta</taxon>
        <taxon>Spermatophyta</taxon>
        <taxon>Magnoliopsida</taxon>
        <taxon>eudicotyledons</taxon>
        <taxon>Gunneridae</taxon>
        <taxon>Pentapetalae</taxon>
        <taxon>rosids</taxon>
        <taxon>malvids</taxon>
        <taxon>Brassicales</taxon>
        <taxon>Brassicaceae</taxon>
        <taxon>Brassiceae</taxon>
        <taxon>Brassica</taxon>
    </lineage>
</organism>
<sequence length="548" mass="62736">MKLLHGLALVFLLAAASCKADEEITCEENNPFTCSNTDILSSKNFGKDFIFGVASSAYQIEGGRGRGVNVWDGFSHRYPEKAGSDLKNGDTTCESYTRWQKDVDVMGELNATGYRFSFAWSRIIPKGKVSRGVNQGGLDYYHKLIDALLEKNITPFVTLFHWDLPQTLQDEYEGFLDRQIIQDFKDYADLCFKEFGGKVKHWITINQLYTVPTRGYAIGTDAPGRCSPMVDTKHRCYGGNSSTEPYIVAHNQLLAHATVVDLYRTKYKFQKGKIGPVMITRWFLPFDESDPASIEAAERMNQFFHGWYMEPLTKGRYPDIMRQIVGSRLPNFTEEEAELVAGSYDFLGLNYYVTQYAQPKPNPYPSETHTAMMDAGVKLTYDNSRGEFLGPLFVEDKVNGNSYYYPKGIYYVMDYFKTKYGDPLIYVTENGFSTPSSENREQAIADYKRIDYLCSHLCFLRKVIKEKGVNVRGYFAWALGDNYEFCKGFTVRFGLSYVNWEDLDDRNLKESGKWYQRFINGTVKNAVKQDFLRSSLSSQSQKKRFADA</sequence>
<evidence type="ECO:0000250" key="1"/>
<evidence type="ECO:0000255" key="2"/>
<evidence type="ECO:0000255" key="3">
    <source>
        <dbReference type="PROSITE-ProRule" id="PRU10055"/>
    </source>
</evidence>
<evidence type="ECO:0000305" key="4"/>
<proteinExistence type="evidence at transcript level"/>
<dbReference type="EC" id="3.2.1.147"/>
<dbReference type="EMBL" id="X60214">
    <property type="protein sequence ID" value="CAA42775.1"/>
    <property type="molecule type" value="mRNA"/>
</dbReference>
<dbReference type="PIR" id="S26149">
    <property type="entry name" value="S26149"/>
</dbReference>
<dbReference type="RefSeq" id="NP_001302796.1">
    <property type="nucleotide sequence ID" value="NM_001315867.1"/>
</dbReference>
<dbReference type="SMR" id="Q00326"/>
<dbReference type="CAZy" id="GH1">
    <property type="family name" value="Glycoside Hydrolase Family 1"/>
</dbReference>
<dbReference type="GeneID" id="106382674"/>
<dbReference type="KEGG" id="bna:106382674"/>
<dbReference type="OrthoDB" id="1029817at2759"/>
<dbReference type="GO" id="GO:0005773">
    <property type="term" value="C:vacuole"/>
    <property type="evidence" value="ECO:0007669"/>
    <property type="project" value="UniProtKB-SubCell"/>
</dbReference>
<dbReference type="GO" id="GO:0046872">
    <property type="term" value="F:metal ion binding"/>
    <property type="evidence" value="ECO:0007669"/>
    <property type="project" value="UniProtKB-KW"/>
</dbReference>
<dbReference type="GO" id="GO:0019137">
    <property type="term" value="F:thioglucosidase activity"/>
    <property type="evidence" value="ECO:0007669"/>
    <property type="project" value="UniProtKB-EC"/>
</dbReference>
<dbReference type="GO" id="GO:0005975">
    <property type="term" value="P:carbohydrate metabolic process"/>
    <property type="evidence" value="ECO:0007669"/>
    <property type="project" value="InterPro"/>
</dbReference>
<dbReference type="FunFam" id="3.20.20.80:FF:000041">
    <property type="entry name" value="Beta-glucosidase 7"/>
    <property type="match status" value="1"/>
</dbReference>
<dbReference type="Gene3D" id="3.20.20.80">
    <property type="entry name" value="Glycosidases"/>
    <property type="match status" value="1"/>
</dbReference>
<dbReference type="InterPro" id="IPR001360">
    <property type="entry name" value="Glyco_hydro_1"/>
</dbReference>
<dbReference type="InterPro" id="IPR018120">
    <property type="entry name" value="Glyco_hydro_1_AS"/>
</dbReference>
<dbReference type="InterPro" id="IPR033132">
    <property type="entry name" value="Glyco_hydro_1_N_CS"/>
</dbReference>
<dbReference type="InterPro" id="IPR017853">
    <property type="entry name" value="Glycoside_hydrolase_SF"/>
</dbReference>
<dbReference type="PANTHER" id="PTHR10353">
    <property type="entry name" value="GLYCOSYL HYDROLASE"/>
    <property type="match status" value="1"/>
</dbReference>
<dbReference type="PANTHER" id="PTHR10353:SF231">
    <property type="entry name" value="THIOGLUCOSIDASE"/>
    <property type="match status" value="1"/>
</dbReference>
<dbReference type="Pfam" id="PF00232">
    <property type="entry name" value="Glyco_hydro_1"/>
    <property type="match status" value="1"/>
</dbReference>
<dbReference type="PRINTS" id="PR00131">
    <property type="entry name" value="GLHYDRLASE1"/>
</dbReference>
<dbReference type="SUPFAM" id="SSF51445">
    <property type="entry name" value="(Trans)glycosidases"/>
    <property type="match status" value="1"/>
</dbReference>
<dbReference type="PROSITE" id="PS00572">
    <property type="entry name" value="GLYCOSYL_HYDROL_F1_1"/>
    <property type="match status" value="1"/>
</dbReference>
<dbReference type="PROSITE" id="PS00653">
    <property type="entry name" value="GLYCOSYL_HYDROL_F1_2"/>
    <property type="match status" value="1"/>
</dbReference>
<name>MYRO_BRANA</name>
<keyword id="KW-1015">Disulfide bond</keyword>
<keyword id="KW-0325">Glycoprotein</keyword>
<keyword id="KW-0326">Glycosidase</keyword>
<keyword id="KW-0378">Hydrolase</keyword>
<keyword id="KW-0479">Metal-binding</keyword>
<keyword id="KW-0732">Signal</keyword>
<keyword id="KW-0926">Vacuole</keyword>
<keyword id="KW-0862">Zinc</keyword>